<proteinExistence type="inferred from homology"/>
<dbReference type="EC" id="3.1.13.-"/>
<dbReference type="EMBL" id="AAEY01000032">
    <property type="protein sequence ID" value="EAL19962.1"/>
    <property type="molecule type" value="Genomic_DNA"/>
</dbReference>
<dbReference type="RefSeq" id="XP_774609.1">
    <property type="nucleotide sequence ID" value="XM_769516.1"/>
</dbReference>
<dbReference type="SMR" id="P0CL89"/>
<dbReference type="GeneID" id="4936841"/>
<dbReference type="KEGG" id="cnb:CNBF2890"/>
<dbReference type="VEuPathDB" id="FungiDB:CNBF2890"/>
<dbReference type="HOGENOM" id="CLU_006038_2_1_1"/>
<dbReference type="OrthoDB" id="6433at5206"/>
<dbReference type="GO" id="GO:0005634">
    <property type="term" value="C:nucleus"/>
    <property type="evidence" value="ECO:0007669"/>
    <property type="project" value="UniProtKB-SubCell"/>
</dbReference>
<dbReference type="GO" id="GO:0004534">
    <property type="term" value="F:5'-3' RNA exonuclease activity"/>
    <property type="evidence" value="ECO:0007669"/>
    <property type="project" value="InterPro"/>
</dbReference>
<dbReference type="GO" id="GO:0003723">
    <property type="term" value="F:RNA binding"/>
    <property type="evidence" value="ECO:0007669"/>
    <property type="project" value="TreeGrafter"/>
</dbReference>
<dbReference type="GO" id="GO:0008270">
    <property type="term" value="F:zinc ion binding"/>
    <property type="evidence" value="ECO:0007669"/>
    <property type="project" value="UniProtKB-KW"/>
</dbReference>
<dbReference type="GO" id="GO:0006353">
    <property type="term" value="P:DNA-templated transcription termination"/>
    <property type="evidence" value="ECO:0007669"/>
    <property type="project" value="UniProtKB-KW"/>
</dbReference>
<dbReference type="GO" id="GO:0006397">
    <property type="term" value="P:mRNA processing"/>
    <property type="evidence" value="ECO:0007669"/>
    <property type="project" value="UniProtKB-KW"/>
</dbReference>
<dbReference type="GO" id="GO:0000956">
    <property type="term" value="P:nuclear-transcribed mRNA catabolic process"/>
    <property type="evidence" value="ECO:0007669"/>
    <property type="project" value="TreeGrafter"/>
</dbReference>
<dbReference type="GO" id="GO:0006364">
    <property type="term" value="P:rRNA processing"/>
    <property type="evidence" value="ECO:0007669"/>
    <property type="project" value="UniProtKB-KW"/>
</dbReference>
<dbReference type="CDD" id="cd18673">
    <property type="entry name" value="PIN_XRN1-2-like"/>
    <property type="match status" value="1"/>
</dbReference>
<dbReference type="FunFam" id="1.25.40.1050:FF:000002">
    <property type="entry name" value="5'-3' exoribonuclease"/>
    <property type="match status" value="1"/>
</dbReference>
<dbReference type="FunFam" id="3.40.50.12390:FF:000003">
    <property type="entry name" value="5'-3' exoribonuclease"/>
    <property type="match status" value="1"/>
</dbReference>
<dbReference type="FunFam" id="3.40.50.12390:FF:000005">
    <property type="entry name" value="5'-3' exoribonuclease 2"/>
    <property type="match status" value="1"/>
</dbReference>
<dbReference type="Gene3D" id="1.25.40.1050">
    <property type="match status" value="1"/>
</dbReference>
<dbReference type="Gene3D" id="3.40.50.12390">
    <property type="match status" value="2"/>
</dbReference>
<dbReference type="InterPro" id="IPR027073">
    <property type="entry name" value="5_3_exoribonuclease"/>
</dbReference>
<dbReference type="InterPro" id="IPR041412">
    <property type="entry name" value="Xrn1_helical"/>
</dbReference>
<dbReference type="InterPro" id="IPR004859">
    <property type="entry name" value="Xrn1_N"/>
</dbReference>
<dbReference type="InterPro" id="IPR017151">
    <property type="entry name" value="Xrn2/3/4"/>
</dbReference>
<dbReference type="InterPro" id="IPR001878">
    <property type="entry name" value="Znf_CCHC"/>
</dbReference>
<dbReference type="InterPro" id="IPR036875">
    <property type="entry name" value="Znf_CCHC_sf"/>
</dbReference>
<dbReference type="PANTHER" id="PTHR12341:SF41">
    <property type="entry name" value="5'-3' EXORIBONUCLEASE 2"/>
    <property type="match status" value="1"/>
</dbReference>
<dbReference type="PANTHER" id="PTHR12341">
    <property type="entry name" value="5'-&gt;3' EXORIBONUCLEASE"/>
    <property type="match status" value="1"/>
</dbReference>
<dbReference type="Pfam" id="PF17846">
    <property type="entry name" value="XRN_M"/>
    <property type="match status" value="2"/>
</dbReference>
<dbReference type="Pfam" id="PF03159">
    <property type="entry name" value="XRN_N"/>
    <property type="match status" value="1"/>
</dbReference>
<dbReference type="Pfam" id="PF00098">
    <property type="entry name" value="zf-CCHC"/>
    <property type="match status" value="1"/>
</dbReference>
<dbReference type="PIRSF" id="PIRSF037239">
    <property type="entry name" value="Exonuclease_Xrn2"/>
    <property type="match status" value="1"/>
</dbReference>
<dbReference type="SMART" id="SM00343">
    <property type="entry name" value="ZnF_C2HC"/>
    <property type="match status" value="1"/>
</dbReference>
<dbReference type="SUPFAM" id="SSF57756">
    <property type="entry name" value="Retrovirus zinc finger-like domains"/>
    <property type="match status" value="1"/>
</dbReference>
<dbReference type="PROSITE" id="PS50158">
    <property type="entry name" value="ZF_CCHC"/>
    <property type="match status" value="1"/>
</dbReference>
<reference key="1">
    <citation type="journal article" date="2005" name="Science">
        <title>The genome of the basidiomycetous yeast and human pathogen Cryptococcus neoformans.</title>
        <authorList>
            <person name="Loftus B.J."/>
            <person name="Fung E."/>
            <person name="Roncaglia P."/>
            <person name="Rowley D."/>
            <person name="Amedeo P."/>
            <person name="Bruno D."/>
            <person name="Vamathevan J."/>
            <person name="Miranda M."/>
            <person name="Anderson I.J."/>
            <person name="Fraser J.A."/>
            <person name="Allen J.E."/>
            <person name="Bosdet I.E."/>
            <person name="Brent M.R."/>
            <person name="Chiu R."/>
            <person name="Doering T.L."/>
            <person name="Donlin M.J."/>
            <person name="D'Souza C.A."/>
            <person name="Fox D.S."/>
            <person name="Grinberg V."/>
            <person name="Fu J."/>
            <person name="Fukushima M."/>
            <person name="Haas B.J."/>
            <person name="Huang J.C."/>
            <person name="Janbon G."/>
            <person name="Jones S.J.M."/>
            <person name="Koo H.L."/>
            <person name="Krzywinski M.I."/>
            <person name="Kwon-Chung K.J."/>
            <person name="Lengeler K.B."/>
            <person name="Maiti R."/>
            <person name="Marra M.A."/>
            <person name="Marra R.E."/>
            <person name="Mathewson C.A."/>
            <person name="Mitchell T.G."/>
            <person name="Pertea M."/>
            <person name="Riggs F.R."/>
            <person name="Salzberg S.L."/>
            <person name="Schein J.E."/>
            <person name="Shvartsbeyn A."/>
            <person name="Shin H."/>
            <person name="Shumway M."/>
            <person name="Specht C.A."/>
            <person name="Suh B.B."/>
            <person name="Tenney A."/>
            <person name="Utterback T.R."/>
            <person name="Wickes B.L."/>
            <person name="Wortman J.R."/>
            <person name="Wye N.H."/>
            <person name="Kronstad J.W."/>
            <person name="Lodge J.K."/>
            <person name="Heitman J."/>
            <person name="Davis R.W."/>
            <person name="Fraser C.M."/>
            <person name="Hyman R.W."/>
        </authorList>
    </citation>
    <scope>NUCLEOTIDE SEQUENCE [LARGE SCALE GENOMIC DNA]</scope>
    <source>
        <strain>B-3501A</strain>
    </source>
</reference>
<sequence length="1130" mass="126478">MGVPALFRWLSKKYPKIVERVKEDTPKKIRGPDGEIVEEPIRYENPNPNGFEVDNLYLDMNGIVHPCTHPEGRPAPETEEEMMVEIFKYTERVVNMCRPRKVLMMAIDGVAPRAKMNQQRSRRFRAAQEAADKEEERREAIKLFEAMGHAVSEETANHKSWDTNAITPGTPFMDLLSISLKYWVSHKLTTDPGWKDLKIILSDSSVPGEGEHKIMDWIRRQRSYPTWDANTSHVIYGLDADLIMLSLATHEPHFRVLREDVFAQSSKGPHACKNCGKVGHIAANCKSDKKFKDPNVAEVAKTEDPKPFIFLDVACLREYLAVELVVPGMPFPFDLELAIDDWIFMIFFVGNDFLPHLPSLEIREGAIDVLLKIWRAELPRMGGYLTNHGKVNLDRAQVILEGLAKSEDEIFQKRKDDEERQEHSQKRRRIEEHKRQDEDKAREEDRNTLTLNGTEYVAVDNPAATARGGPLHPSLPSRPAFDLVPKEDAVKQPEDQDQKAKKAMAGSNSDIVKNRKAIRMANMSAAQALKAELEGGNDVNVDDKKAIAQEGKEEDEAVVTVERTEDEEKEQLTKEEARGTLEEQGEKEGVDEEVVPPAIQTDEDEGEAPVGDATVAENDESTIPEDDEDPTHVPRKRKRGDSDGDEDSNEEDDDDDDDDAPPNPEADQPIPKKKLKVNADGTVDYEDDVKLWEPGYRERYYEKKFGVKLSEREFIDKVTKSYMEGLCWVLEYYYQGVPAWDWFYPYHYAPFAQDFRDVGSMDIKFETSIPFKPFAQLLGVFPAASRIHLPEPLQTLMIDEDSPILDFYPPDFEIDMNGKKMAWQGVALLPFIDQNRLLTALKSKEELLSDDEKRRNSWGDNVMFIANENPLYDLFCDKLYGLRAKDVSKPIPIDTKASYGITGSVLPDPNCVPASTFDTPIPSISECPDLNPNDSISVRYYFPRQAHPHRSILLRGYKPEPARLTESDKDWVRRGGQGGRRGHRHNGGGNGNVTGGPGMARGRYESGPPRTNGYQPPPPRSNYGGSSGYGYGAPAPLPSRPPVSSYGGGAGGYGYSNPYAAAPNPYAGGYGAPAPYAAGGYGQRPYVPPLPPPNPYSAPPPAYGRPPGGGYGYGAPPPRGGGYNPYPSRR</sequence>
<accession>P0CL89</accession>
<accession>Q55QP9</accession>
<accession>Q5KFG7</accession>
<feature type="initiator methionine" description="Removed" evidence="1">
    <location>
        <position position="1"/>
    </location>
</feature>
<feature type="chain" id="PRO_0000409995" description="5'-3' exoribonuclease 2">
    <location>
        <begin position="2"/>
        <end position="1130"/>
    </location>
</feature>
<feature type="zinc finger region" description="CCHC-type" evidence="5">
    <location>
        <begin position="270"/>
        <end position="287"/>
    </location>
</feature>
<feature type="region of interest" description="Disordered" evidence="6">
    <location>
        <begin position="411"/>
        <end position="448"/>
    </location>
</feature>
<feature type="region of interest" description="Disordered" evidence="6">
    <location>
        <begin position="533"/>
        <end position="678"/>
    </location>
</feature>
<feature type="region of interest" description="Disordered" evidence="6">
    <location>
        <begin position="965"/>
        <end position="1036"/>
    </location>
</feature>
<feature type="region of interest" description="Disordered" evidence="6">
    <location>
        <begin position="1072"/>
        <end position="1130"/>
    </location>
</feature>
<feature type="coiled-coil region" evidence="4">
    <location>
        <begin position="121"/>
        <end position="147"/>
    </location>
</feature>
<feature type="coiled-coil region" evidence="4">
    <location>
        <begin position="412"/>
        <end position="441"/>
    </location>
</feature>
<feature type="compositionally biased region" description="Basic and acidic residues" evidence="6">
    <location>
        <begin position="411"/>
        <end position="447"/>
    </location>
</feature>
<feature type="compositionally biased region" description="Basic and acidic residues" evidence="6">
    <location>
        <begin position="541"/>
        <end position="551"/>
    </location>
</feature>
<feature type="compositionally biased region" description="Basic and acidic residues" evidence="6">
    <location>
        <begin position="570"/>
        <end position="588"/>
    </location>
</feature>
<feature type="compositionally biased region" description="Acidic residues" evidence="6">
    <location>
        <begin position="617"/>
        <end position="629"/>
    </location>
</feature>
<feature type="compositionally biased region" description="Acidic residues" evidence="6">
    <location>
        <begin position="643"/>
        <end position="660"/>
    </location>
</feature>
<feature type="compositionally biased region" description="Gly residues" evidence="6">
    <location>
        <begin position="987"/>
        <end position="999"/>
    </location>
</feature>
<feature type="compositionally biased region" description="Pro residues" evidence="6">
    <location>
        <begin position="1086"/>
        <end position="1104"/>
    </location>
</feature>
<keyword id="KW-0175">Coiled coil</keyword>
<keyword id="KW-0269">Exonuclease</keyword>
<keyword id="KW-0378">Hydrolase</keyword>
<keyword id="KW-0479">Metal-binding</keyword>
<keyword id="KW-0507">mRNA processing</keyword>
<keyword id="KW-0540">Nuclease</keyword>
<keyword id="KW-0539">Nucleus</keyword>
<keyword id="KW-0698">rRNA processing</keyword>
<keyword id="KW-0804">Transcription</keyword>
<keyword id="KW-0805">Transcription regulation</keyword>
<keyword id="KW-0806">Transcription termination</keyword>
<keyword id="KW-0862">Zinc</keyword>
<keyword id="KW-0863">Zinc-finger</keyword>
<protein>
    <recommendedName>
        <fullName>5'-3' exoribonuclease 2</fullName>
        <ecNumber>3.1.13.-</ecNumber>
    </recommendedName>
</protein>
<comment type="function">
    <text evidence="2 3">Possesses 5'-&gt;3' exoribonuclease activity (By similarity). Required for the processing of nuclear mRNA and rRNA precursors. May promote the termination of transcription by RNA polymerase II (By similarity). Essential for vegetative cell growth and chromosome segregation (By similarity).</text>
</comment>
<comment type="subunit">
    <text evidence="2">Interacts with RAI1; the interaction is direct, stabilizes RAT1 protein structure and may stimulate its exoribonuclease activity (By similarity). The interaction also stimulates RAI1 pyrophosphohydrolase activity, probably by recruiting it to mRNA substrates (By similarity).</text>
</comment>
<comment type="subcellular location">
    <subcellularLocation>
        <location evidence="1">Nucleus</location>
    </subcellularLocation>
</comment>
<comment type="similarity">
    <text evidence="7">Belongs to the 5'-3' exonuclease family. XRN2/RAT1 subfamily.</text>
</comment>
<evidence type="ECO:0000250" key="1"/>
<evidence type="ECO:0000250" key="2">
    <source>
        <dbReference type="UniProtKB" id="P40848"/>
    </source>
</evidence>
<evidence type="ECO:0000250" key="3">
    <source>
        <dbReference type="UniProtKB" id="Q02792"/>
    </source>
</evidence>
<evidence type="ECO:0000255" key="4"/>
<evidence type="ECO:0000255" key="5">
    <source>
        <dbReference type="PROSITE-ProRule" id="PRU00047"/>
    </source>
</evidence>
<evidence type="ECO:0000256" key="6">
    <source>
        <dbReference type="SAM" id="MobiDB-lite"/>
    </source>
</evidence>
<evidence type="ECO:0000305" key="7"/>
<organism>
    <name type="scientific">Cryptococcus neoformans var. neoformans serotype D (strain B-3501A)</name>
    <name type="common">Filobasidiella neoformans</name>
    <dbReference type="NCBI Taxonomy" id="283643"/>
    <lineage>
        <taxon>Eukaryota</taxon>
        <taxon>Fungi</taxon>
        <taxon>Dikarya</taxon>
        <taxon>Basidiomycota</taxon>
        <taxon>Agaricomycotina</taxon>
        <taxon>Tremellomycetes</taxon>
        <taxon>Tremellales</taxon>
        <taxon>Cryptococcaceae</taxon>
        <taxon>Cryptococcus</taxon>
        <taxon>Cryptococcus neoformans species complex</taxon>
    </lineage>
</organism>
<gene>
    <name type="primary">RAT1</name>
    <name type="ordered locus">CNBF2890</name>
</gene>
<name>XRN2_CRYNB</name>